<gene>
    <name evidence="1" type="primary">ftsQ</name>
    <name type="ordered locus">NGO_1530</name>
</gene>
<dbReference type="EMBL" id="AE004969">
    <property type="protein sequence ID" value="AAW90166.1"/>
    <property type="molecule type" value="Genomic_DNA"/>
</dbReference>
<dbReference type="RefSeq" id="WP_003689436.1">
    <property type="nucleotide sequence ID" value="NC_002946.2"/>
</dbReference>
<dbReference type="RefSeq" id="YP_208578.1">
    <property type="nucleotide sequence ID" value="NC_002946.2"/>
</dbReference>
<dbReference type="SMR" id="Q5F6M1"/>
<dbReference type="STRING" id="242231.NGO_1530"/>
<dbReference type="KEGG" id="ngo:NGO_1530"/>
<dbReference type="PATRIC" id="fig|242231.10.peg.1826"/>
<dbReference type="HOGENOM" id="CLU_064041_0_0_4"/>
<dbReference type="Proteomes" id="UP000000535">
    <property type="component" value="Chromosome"/>
</dbReference>
<dbReference type="GO" id="GO:0032153">
    <property type="term" value="C:cell division site"/>
    <property type="evidence" value="ECO:0007669"/>
    <property type="project" value="UniProtKB-UniRule"/>
</dbReference>
<dbReference type="GO" id="GO:0005886">
    <property type="term" value="C:plasma membrane"/>
    <property type="evidence" value="ECO:0007669"/>
    <property type="project" value="UniProtKB-SubCell"/>
</dbReference>
<dbReference type="GO" id="GO:0090529">
    <property type="term" value="P:cell septum assembly"/>
    <property type="evidence" value="ECO:0007669"/>
    <property type="project" value="InterPro"/>
</dbReference>
<dbReference type="GO" id="GO:0043093">
    <property type="term" value="P:FtsZ-dependent cytokinesis"/>
    <property type="evidence" value="ECO:0007669"/>
    <property type="project" value="UniProtKB-UniRule"/>
</dbReference>
<dbReference type="Gene3D" id="3.40.50.11690">
    <property type="entry name" value="Cell division protein FtsQ/DivIB"/>
    <property type="match status" value="1"/>
</dbReference>
<dbReference type="Gene3D" id="3.10.20.310">
    <property type="entry name" value="membrane protein fhac"/>
    <property type="match status" value="1"/>
</dbReference>
<dbReference type="HAMAP" id="MF_00911">
    <property type="entry name" value="FtsQ_subfam"/>
    <property type="match status" value="1"/>
</dbReference>
<dbReference type="InterPro" id="IPR005548">
    <property type="entry name" value="Cell_div_FtsQ/DivIB_C"/>
</dbReference>
<dbReference type="InterPro" id="IPR026579">
    <property type="entry name" value="FtsQ"/>
</dbReference>
<dbReference type="InterPro" id="IPR045335">
    <property type="entry name" value="FtsQ_C_sf"/>
</dbReference>
<dbReference type="InterPro" id="IPR034746">
    <property type="entry name" value="POTRA"/>
</dbReference>
<dbReference type="InterPro" id="IPR013685">
    <property type="entry name" value="POTRA_FtsQ_type"/>
</dbReference>
<dbReference type="PANTHER" id="PTHR35851">
    <property type="entry name" value="CELL DIVISION PROTEIN FTSQ"/>
    <property type="match status" value="1"/>
</dbReference>
<dbReference type="PANTHER" id="PTHR35851:SF1">
    <property type="entry name" value="CELL DIVISION PROTEIN FTSQ"/>
    <property type="match status" value="1"/>
</dbReference>
<dbReference type="Pfam" id="PF03799">
    <property type="entry name" value="FtsQ_DivIB_C"/>
    <property type="match status" value="1"/>
</dbReference>
<dbReference type="Pfam" id="PF08478">
    <property type="entry name" value="POTRA_1"/>
    <property type="match status" value="1"/>
</dbReference>
<dbReference type="PROSITE" id="PS51779">
    <property type="entry name" value="POTRA"/>
    <property type="match status" value="1"/>
</dbReference>
<name>FTSQ_NEIG1</name>
<accession>Q5F6M1</accession>
<evidence type="ECO:0000255" key="1">
    <source>
        <dbReference type="HAMAP-Rule" id="MF_00911"/>
    </source>
</evidence>
<evidence type="ECO:0000255" key="2">
    <source>
        <dbReference type="PROSITE-ProRule" id="PRU01115"/>
    </source>
</evidence>
<proteinExistence type="inferred from homology"/>
<feature type="chain" id="PRO_0000414681" description="Cell division protein FtsQ">
    <location>
        <begin position="1"/>
        <end position="242"/>
    </location>
</feature>
<feature type="topological domain" description="Cytoplasmic" evidence="1">
    <location>
        <begin position="1"/>
        <end position="12"/>
    </location>
</feature>
<feature type="transmembrane region" description="Helical" evidence="1">
    <location>
        <begin position="13"/>
        <end position="32"/>
    </location>
</feature>
<feature type="topological domain" description="Periplasmic" evidence="1">
    <location>
        <begin position="33"/>
        <end position="242"/>
    </location>
</feature>
<feature type="domain" description="POTRA" evidence="2">
    <location>
        <begin position="37"/>
        <end position="106"/>
    </location>
</feature>
<sequence>MWDNAEAMERLTRWLLVMMAMLLAASGLVWFYNSNHLPVKQVSLKGNLVYSDKKALGSLAKEYIHGNILRTDINGAQEAYRRYPWIASVMVRRRFPDTVEVVLTERKPVARWGDHALVDGEGNVFEARLDRPGMPVFRGAEGTSAEMLRRYDEFSTVLAKQGLGIKEMTYTARSAWNVVLDNGITVRLGRENEMKRLRLFTEAWQHLLRKNKNRLSYVDMRYKDGFSVRHAPDGLPEKESEE</sequence>
<keyword id="KW-0131">Cell cycle</keyword>
<keyword id="KW-0132">Cell division</keyword>
<keyword id="KW-0997">Cell inner membrane</keyword>
<keyword id="KW-1003">Cell membrane</keyword>
<keyword id="KW-0472">Membrane</keyword>
<keyword id="KW-1185">Reference proteome</keyword>
<keyword id="KW-0812">Transmembrane</keyword>
<keyword id="KW-1133">Transmembrane helix</keyword>
<comment type="function">
    <text evidence="1">Essential cell division protein. May link together the upstream cell division proteins, which are predominantly cytoplasmic, with the downstream cell division proteins, which are predominantly periplasmic. May control correct divisome assembly.</text>
</comment>
<comment type="subunit">
    <text evidence="1">Part of a complex composed of FtsB, FtsL and FtsQ.</text>
</comment>
<comment type="subcellular location">
    <subcellularLocation>
        <location evidence="1">Cell inner membrane</location>
        <topology evidence="1">Single-pass type II membrane protein</topology>
    </subcellularLocation>
    <text evidence="1">Localizes to the division septum.</text>
</comment>
<comment type="similarity">
    <text evidence="1">Belongs to the FtsQ/DivIB family. FtsQ subfamily.</text>
</comment>
<protein>
    <recommendedName>
        <fullName evidence="1">Cell division protein FtsQ</fullName>
    </recommendedName>
</protein>
<reference key="1">
    <citation type="submission" date="2003-03" db="EMBL/GenBank/DDBJ databases">
        <title>The complete genome sequence of Neisseria gonorrhoeae.</title>
        <authorList>
            <person name="Lewis L.A."/>
            <person name="Gillaspy A.F."/>
            <person name="McLaughlin R.E."/>
            <person name="Gipson M."/>
            <person name="Ducey T.F."/>
            <person name="Ownbey T."/>
            <person name="Hartman K."/>
            <person name="Nydick C."/>
            <person name="Carson M.B."/>
            <person name="Vaughn J."/>
            <person name="Thomson C."/>
            <person name="Song L."/>
            <person name="Lin S."/>
            <person name="Yuan X."/>
            <person name="Najar F."/>
            <person name="Zhan M."/>
            <person name="Ren Q."/>
            <person name="Zhu H."/>
            <person name="Qi S."/>
            <person name="Kenton S.M."/>
            <person name="Lai H."/>
            <person name="White J.D."/>
            <person name="Clifton S."/>
            <person name="Roe B.A."/>
            <person name="Dyer D.W."/>
        </authorList>
    </citation>
    <scope>NUCLEOTIDE SEQUENCE [LARGE SCALE GENOMIC DNA]</scope>
    <source>
        <strain>ATCC 700825 / FA 1090</strain>
    </source>
</reference>
<organism>
    <name type="scientific">Neisseria gonorrhoeae (strain ATCC 700825 / FA 1090)</name>
    <dbReference type="NCBI Taxonomy" id="242231"/>
    <lineage>
        <taxon>Bacteria</taxon>
        <taxon>Pseudomonadati</taxon>
        <taxon>Pseudomonadota</taxon>
        <taxon>Betaproteobacteria</taxon>
        <taxon>Neisseriales</taxon>
        <taxon>Neisseriaceae</taxon>
        <taxon>Neisseria</taxon>
    </lineage>
</organism>